<comment type="function">
    <text evidence="1">RNA chaperone that binds small regulatory RNA (sRNAs) and mRNAs to facilitate mRNA translational regulation in response to envelope stress, environmental stress and changes in metabolite concentrations. Also binds with high specificity to tRNAs.</text>
</comment>
<comment type="subunit">
    <text evidence="1">Homohexamer.</text>
</comment>
<comment type="similarity">
    <text evidence="1">Belongs to the Hfq family.</text>
</comment>
<accession>A9IK70</accession>
<dbReference type="EMBL" id="AM902716">
    <property type="protein sequence ID" value="CAP42365.1"/>
    <property type="molecule type" value="Genomic_DNA"/>
</dbReference>
<dbReference type="SMR" id="A9IK70"/>
<dbReference type="STRING" id="94624.Bpet2025"/>
<dbReference type="KEGG" id="bpt:Bpet2025"/>
<dbReference type="eggNOG" id="COG1923">
    <property type="taxonomic scope" value="Bacteria"/>
</dbReference>
<dbReference type="Proteomes" id="UP000001225">
    <property type="component" value="Chromosome"/>
</dbReference>
<dbReference type="GO" id="GO:0005829">
    <property type="term" value="C:cytosol"/>
    <property type="evidence" value="ECO:0007669"/>
    <property type="project" value="TreeGrafter"/>
</dbReference>
<dbReference type="GO" id="GO:0003723">
    <property type="term" value="F:RNA binding"/>
    <property type="evidence" value="ECO:0007669"/>
    <property type="project" value="UniProtKB-UniRule"/>
</dbReference>
<dbReference type="GO" id="GO:0006355">
    <property type="term" value="P:regulation of DNA-templated transcription"/>
    <property type="evidence" value="ECO:0007669"/>
    <property type="project" value="InterPro"/>
</dbReference>
<dbReference type="GO" id="GO:0043487">
    <property type="term" value="P:regulation of RNA stability"/>
    <property type="evidence" value="ECO:0007669"/>
    <property type="project" value="TreeGrafter"/>
</dbReference>
<dbReference type="GO" id="GO:0045974">
    <property type="term" value="P:regulation of translation, ncRNA-mediated"/>
    <property type="evidence" value="ECO:0007669"/>
    <property type="project" value="TreeGrafter"/>
</dbReference>
<dbReference type="CDD" id="cd01716">
    <property type="entry name" value="Hfq"/>
    <property type="match status" value="1"/>
</dbReference>
<dbReference type="FunFam" id="2.30.30.100:FF:000001">
    <property type="entry name" value="RNA-binding protein Hfq"/>
    <property type="match status" value="1"/>
</dbReference>
<dbReference type="Gene3D" id="2.30.30.100">
    <property type="match status" value="1"/>
</dbReference>
<dbReference type="HAMAP" id="MF_00436">
    <property type="entry name" value="Hfq"/>
    <property type="match status" value="1"/>
</dbReference>
<dbReference type="InterPro" id="IPR005001">
    <property type="entry name" value="Hfq"/>
</dbReference>
<dbReference type="InterPro" id="IPR010920">
    <property type="entry name" value="LSM_dom_sf"/>
</dbReference>
<dbReference type="InterPro" id="IPR047575">
    <property type="entry name" value="Sm"/>
</dbReference>
<dbReference type="NCBIfam" id="TIGR02383">
    <property type="entry name" value="Hfq"/>
    <property type="match status" value="1"/>
</dbReference>
<dbReference type="NCBIfam" id="NF001602">
    <property type="entry name" value="PRK00395.1"/>
    <property type="match status" value="1"/>
</dbReference>
<dbReference type="PANTHER" id="PTHR34772">
    <property type="entry name" value="RNA-BINDING PROTEIN HFQ"/>
    <property type="match status" value="1"/>
</dbReference>
<dbReference type="PANTHER" id="PTHR34772:SF1">
    <property type="entry name" value="RNA-BINDING PROTEIN HFQ"/>
    <property type="match status" value="1"/>
</dbReference>
<dbReference type="Pfam" id="PF17209">
    <property type="entry name" value="Hfq"/>
    <property type="match status" value="1"/>
</dbReference>
<dbReference type="SUPFAM" id="SSF50182">
    <property type="entry name" value="Sm-like ribonucleoproteins"/>
    <property type="match status" value="1"/>
</dbReference>
<dbReference type="PROSITE" id="PS52002">
    <property type="entry name" value="SM"/>
    <property type="match status" value="1"/>
</dbReference>
<feature type="chain" id="PRO_1000190308" description="RNA-binding protein Hfq">
    <location>
        <begin position="1"/>
        <end position="78"/>
    </location>
</feature>
<feature type="domain" description="Sm" evidence="2">
    <location>
        <begin position="10"/>
        <end position="69"/>
    </location>
</feature>
<gene>
    <name evidence="1" type="primary">hfq</name>
    <name type="ordered locus">Bpet2025</name>
</gene>
<name>HFQ_BORPD</name>
<evidence type="ECO:0000255" key="1">
    <source>
        <dbReference type="HAMAP-Rule" id="MF_00436"/>
    </source>
</evidence>
<evidence type="ECO:0000255" key="2">
    <source>
        <dbReference type="PROSITE-ProRule" id="PRU01346"/>
    </source>
</evidence>
<reference key="1">
    <citation type="journal article" date="2008" name="BMC Genomics">
        <title>The missing link: Bordetella petrii is endowed with both the metabolic versatility of environmental bacteria and virulence traits of pathogenic Bordetellae.</title>
        <authorList>
            <person name="Gross R."/>
            <person name="Guzman C.A."/>
            <person name="Sebaihia M."/>
            <person name="Martin dos Santos V.A.P."/>
            <person name="Pieper D.H."/>
            <person name="Koebnik R."/>
            <person name="Lechner M."/>
            <person name="Bartels D."/>
            <person name="Buhrmester J."/>
            <person name="Choudhuri J.V."/>
            <person name="Ebensen T."/>
            <person name="Gaigalat L."/>
            <person name="Herrmann S."/>
            <person name="Khachane A.N."/>
            <person name="Larisch C."/>
            <person name="Link S."/>
            <person name="Linke B."/>
            <person name="Meyer F."/>
            <person name="Mormann S."/>
            <person name="Nakunst D."/>
            <person name="Rueckert C."/>
            <person name="Schneiker-Bekel S."/>
            <person name="Schulze K."/>
            <person name="Voerholter F.-J."/>
            <person name="Yevsa T."/>
            <person name="Engle J.T."/>
            <person name="Goldman W.E."/>
            <person name="Puehler A."/>
            <person name="Goebel U.B."/>
            <person name="Goesmann A."/>
            <person name="Bloecker H."/>
            <person name="Kaiser O."/>
            <person name="Martinez-Arias R."/>
        </authorList>
    </citation>
    <scope>NUCLEOTIDE SEQUENCE [LARGE SCALE GENOMIC DNA]</scope>
    <source>
        <strain>ATCC BAA-461 / DSM 12804 / CCUG 43448</strain>
    </source>
</reference>
<sequence>MSNKGQTLQDPFLNTLRKEHVPVSIYLVNGIKLQGQIESFDQYVVLLRNTVTQMVYKHAISTVVPARAVNFQVDVPAE</sequence>
<keyword id="KW-0694">RNA-binding</keyword>
<keyword id="KW-0346">Stress response</keyword>
<proteinExistence type="inferred from homology"/>
<protein>
    <recommendedName>
        <fullName evidence="1">RNA-binding protein Hfq</fullName>
    </recommendedName>
</protein>
<organism>
    <name type="scientific">Bordetella petrii (strain ATCC BAA-461 / DSM 12804 / CCUG 43448)</name>
    <dbReference type="NCBI Taxonomy" id="340100"/>
    <lineage>
        <taxon>Bacteria</taxon>
        <taxon>Pseudomonadati</taxon>
        <taxon>Pseudomonadota</taxon>
        <taxon>Betaproteobacteria</taxon>
        <taxon>Burkholderiales</taxon>
        <taxon>Alcaligenaceae</taxon>
        <taxon>Bordetella</taxon>
    </lineage>
</organism>